<protein>
    <recommendedName>
        <fullName evidence="2">tRNA (guanine-N(7)-)-methyltransferase non-catalytic subunit WDR4</fullName>
    </recommendedName>
    <alternativeName>
        <fullName evidence="2">WD repeat-containing protein 4</fullName>
    </alternativeName>
</protein>
<accession>A7E3S5</accession>
<evidence type="ECO:0000250" key="1">
    <source>
        <dbReference type="UniProtKB" id="P57081"/>
    </source>
</evidence>
<evidence type="ECO:0000255" key="2">
    <source>
        <dbReference type="HAMAP-Rule" id="MF_03056"/>
    </source>
</evidence>
<evidence type="ECO:0000256" key="3">
    <source>
        <dbReference type="SAM" id="MobiDB-lite"/>
    </source>
</evidence>
<organism>
    <name type="scientific">Bos taurus</name>
    <name type="common">Bovine</name>
    <dbReference type="NCBI Taxonomy" id="9913"/>
    <lineage>
        <taxon>Eukaryota</taxon>
        <taxon>Metazoa</taxon>
        <taxon>Chordata</taxon>
        <taxon>Craniata</taxon>
        <taxon>Vertebrata</taxon>
        <taxon>Euteleostomi</taxon>
        <taxon>Mammalia</taxon>
        <taxon>Eutheria</taxon>
        <taxon>Laurasiatheria</taxon>
        <taxon>Artiodactyla</taxon>
        <taxon>Ruminantia</taxon>
        <taxon>Pecora</taxon>
        <taxon>Bovidae</taxon>
        <taxon>Bovinae</taxon>
        <taxon>Bos</taxon>
    </lineage>
</organism>
<gene>
    <name evidence="2" type="primary">WDR4</name>
</gene>
<name>WDR4_BOVIN</name>
<comment type="function">
    <text evidence="2">Non-catalytic component of the METTL1-WDR4 methyltransferase complex required for the formation of N(7)-methylguanine in a subset of RNA species, such as tRNAs, mRNAs and microRNAs (miRNAs). In the METTL1-WDR4 methyltransferase complex, WDR4 acts as a scaffold for tRNA-binding. Required for the formation of N(7)-methylguanine at position 46 (m7G46) in a large subset of tRNAs that contain the 5'-RAGGU-3' motif within the variable loop. M7G46 interacts with C13-G22 in the D-loop to stabilize tRNA tertiary structure and protect tRNAs from decay. Also required for the formation of N(7)-methylguanine at internal sites in a subset of mRNAs. Also required for methylation of a specific subset of miRNAs, such as let-7. Independently of METTL1, also plays a role in genome stability: localizes at the DNA replication site and regulates endonucleolytic activities of FEN1.</text>
</comment>
<comment type="pathway">
    <text evidence="2">tRNA modification; N(7)-methylguanine-tRNA biosynthesis.</text>
</comment>
<comment type="subunit">
    <text evidence="2">Non-catalytic component of the METTL1-WDR4 complex, composed of METTL1 and WDR4. Interacts with FEN1; the interaction is direct.</text>
</comment>
<comment type="subcellular location">
    <subcellularLocation>
        <location evidence="2">Nucleus</location>
    </subcellularLocation>
    <subcellularLocation>
        <location evidence="2">Chromosome</location>
    </subcellularLocation>
    <text evidence="2">Localizes at the site of nascent DNA synthesis.</text>
</comment>
<comment type="similarity">
    <text evidence="2">Belongs to the WD repeat TRM82 family.</text>
</comment>
<sequence>MASSAGLALCGHALVVRGGSRLLATSTSSSDGDSLFIYDCSAAEKKSQENKGEDGQPVDQGSDTVLASTFSKSGSYFVLTDDSKRLILFRTNPWQCLSVRTVVRRCTALTFTASEEKILVADKSGDVYSFSVLEPHGGGRLELGHLSMLLDVAVSPDDRFVLTADRDEKIRVSWAAAPHSIESFCLGHTEFVSRIFVVPNHPELLLSSSGDCTLRLWEYRSGRELHCCPLTSLQEPTEPWSDKRFAVSRITYWSQEDCVALSCDGLPVVYIFQLDAAQRQLVPRQLLTFQHRVWDAAFEEGHGLWVLQDCREDPLVLYRPVGGQWQSAPESAELRRVCAHVRVNWAMLEGCAGVDSGFSSLYKATCDNMTTYLKKKEERLQQQLEKKRRQAPPPGPNGPTKKMRAGELAQGCSS</sequence>
<reference key="1">
    <citation type="journal article" date="2005" name="BMC Genomics">
        <title>Characterization of 954 bovine full-CDS cDNA sequences.</title>
        <authorList>
            <person name="Harhay G.P."/>
            <person name="Sonstegard T.S."/>
            <person name="Keele J.W."/>
            <person name="Heaton M.P."/>
            <person name="Clawson M.L."/>
            <person name="Snelling W.M."/>
            <person name="Wiedmann R.T."/>
            <person name="Van Tassell C.P."/>
            <person name="Smith T.P.L."/>
        </authorList>
    </citation>
    <scope>NUCLEOTIDE SEQUENCE [LARGE SCALE MRNA]</scope>
</reference>
<feature type="initiator methionine" description="Removed" evidence="1">
    <location>
        <position position="1"/>
    </location>
</feature>
<feature type="chain" id="PRO_0000370532" description="tRNA (guanine-N(7)-)-methyltransferase non-catalytic subunit WDR4">
    <location>
        <begin position="2"/>
        <end position="414"/>
    </location>
</feature>
<feature type="repeat" description="WD 1">
    <location>
        <begin position="60"/>
        <end position="99"/>
    </location>
</feature>
<feature type="repeat" description="WD 2">
    <location>
        <begin position="101"/>
        <end position="140"/>
    </location>
</feature>
<feature type="repeat" description="WD 3">
    <location>
        <begin position="144"/>
        <end position="184"/>
    </location>
</feature>
<feature type="repeat" description="WD 4">
    <location>
        <begin position="187"/>
        <end position="227"/>
    </location>
</feature>
<feature type="region of interest" description="Disordered" evidence="3">
    <location>
        <begin position="377"/>
        <end position="414"/>
    </location>
</feature>
<feature type="modified residue" description="N-acetylalanine" evidence="1">
    <location>
        <position position="2"/>
    </location>
</feature>
<proteinExistence type="evidence at transcript level"/>
<dbReference type="EMBL" id="BT030696">
    <property type="protein sequence ID" value="ABS45012.1"/>
    <property type="molecule type" value="mRNA"/>
</dbReference>
<dbReference type="RefSeq" id="NP_001093790.1">
    <property type="nucleotide sequence ID" value="NM_001100320.1"/>
</dbReference>
<dbReference type="SMR" id="A7E3S5"/>
<dbReference type="FunCoup" id="A7E3S5">
    <property type="interactions" value="1078"/>
</dbReference>
<dbReference type="STRING" id="9913.ENSBTAP00000070058"/>
<dbReference type="PaxDb" id="9913-ENSBTAP00000028643"/>
<dbReference type="GeneID" id="508051"/>
<dbReference type="KEGG" id="bta:508051"/>
<dbReference type="CTD" id="10785"/>
<dbReference type="eggNOG" id="KOG3914">
    <property type="taxonomic scope" value="Eukaryota"/>
</dbReference>
<dbReference type="HOGENOM" id="CLU_054270_1_0_1"/>
<dbReference type="InParanoid" id="A7E3S5"/>
<dbReference type="OrthoDB" id="371245at2759"/>
<dbReference type="TreeFam" id="TF105877"/>
<dbReference type="UniPathway" id="UPA00989"/>
<dbReference type="Proteomes" id="UP000009136">
    <property type="component" value="Unplaced"/>
</dbReference>
<dbReference type="GO" id="GO:0005694">
    <property type="term" value="C:chromosome"/>
    <property type="evidence" value="ECO:0007669"/>
    <property type="project" value="UniProtKB-SubCell"/>
</dbReference>
<dbReference type="GO" id="GO:0005829">
    <property type="term" value="C:cytosol"/>
    <property type="evidence" value="ECO:0000318"/>
    <property type="project" value="GO_Central"/>
</dbReference>
<dbReference type="GO" id="GO:0005634">
    <property type="term" value="C:nucleus"/>
    <property type="evidence" value="ECO:0000250"/>
    <property type="project" value="UniProtKB"/>
</dbReference>
<dbReference type="GO" id="GO:0106143">
    <property type="term" value="C:tRNA (m7G46) methyltransferase complex"/>
    <property type="evidence" value="ECO:0000250"/>
    <property type="project" value="UniProtKB"/>
</dbReference>
<dbReference type="GO" id="GO:0043527">
    <property type="term" value="C:tRNA methyltransferase complex"/>
    <property type="evidence" value="ECO:0000318"/>
    <property type="project" value="GO_Central"/>
</dbReference>
<dbReference type="GO" id="GO:0008047">
    <property type="term" value="F:enzyme activator activity"/>
    <property type="evidence" value="ECO:0000250"/>
    <property type="project" value="UniProtKB"/>
</dbReference>
<dbReference type="GO" id="GO:0006974">
    <property type="term" value="P:DNA damage response"/>
    <property type="evidence" value="ECO:0007669"/>
    <property type="project" value="UniProtKB-KW"/>
</dbReference>
<dbReference type="GO" id="GO:0106004">
    <property type="term" value="P:tRNA (guanine-N7)-methylation"/>
    <property type="evidence" value="ECO:0000250"/>
    <property type="project" value="UniProtKB"/>
</dbReference>
<dbReference type="GO" id="GO:0006400">
    <property type="term" value="P:tRNA modification"/>
    <property type="evidence" value="ECO:0000250"/>
    <property type="project" value="UniProtKB"/>
</dbReference>
<dbReference type="FunFam" id="2.130.10.10:FF:000454">
    <property type="entry name" value="tRNA (guanine-N(7)-)-methyltransferase non-catalytic subunit WDR4"/>
    <property type="match status" value="1"/>
</dbReference>
<dbReference type="Gene3D" id="2.130.10.10">
    <property type="entry name" value="YVTN repeat-like/Quinoprotein amine dehydrogenase"/>
    <property type="match status" value="1"/>
</dbReference>
<dbReference type="HAMAP" id="MF_03056">
    <property type="entry name" value="TRM82"/>
    <property type="match status" value="1"/>
</dbReference>
<dbReference type="InterPro" id="IPR028884">
    <property type="entry name" value="Trm82"/>
</dbReference>
<dbReference type="InterPro" id="IPR015943">
    <property type="entry name" value="WD40/YVTN_repeat-like_dom_sf"/>
</dbReference>
<dbReference type="InterPro" id="IPR036322">
    <property type="entry name" value="WD40_repeat_dom_sf"/>
</dbReference>
<dbReference type="InterPro" id="IPR001680">
    <property type="entry name" value="WD40_rpt"/>
</dbReference>
<dbReference type="PANTHER" id="PTHR16288:SF0">
    <property type="entry name" value="TRNA (GUANINE-N(7)-)-METHYLTRANSFERASE NON-CATALYTIC SUBUNIT WDR4"/>
    <property type="match status" value="1"/>
</dbReference>
<dbReference type="PANTHER" id="PTHR16288">
    <property type="entry name" value="WD40 REPEAT PROTEIN 4"/>
    <property type="match status" value="1"/>
</dbReference>
<dbReference type="Pfam" id="PF00400">
    <property type="entry name" value="WD40"/>
    <property type="match status" value="2"/>
</dbReference>
<dbReference type="SMART" id="SM00320">
    <property type="entry name" value="WD40"/>
    <property type="match status" value="3"/>
</dbReference>
<dbReference type="SUPFAM" id="SSF50978">
    <property type="entry name" value="WD40 repeat-like"/>
    <property type="match status" value="1"/>
</dbReference>
<dbReference type="PROSITE" id="PS50082">
    <property type="entry name" value="WD_REPEATS_2"/>
    <property type="match status" value="1"/>
</dbReference>
<dbReference type="PROSITE" id="PS50294">
    <property type="entry name" value="WD_REPEATS_REGION"/>
    <property type="match status" value="1"/>
</dbReference>
<keyword id="KW-0007">Acetylation</keyword>
<keyword id="KW-0158">Chromosome</keyword>
<keyword id="KW-0227">DNA damage</keyword>
<keyword id="KW-0539">Nucleus</keyword>
<keyword id="KW-1185">Reference proteome</keyword>
<keyword id="KW-0677">Repeat</keyword>
<keyword id="KW-0819">tRNA processing</keyword>
<keyword id="KW-0853">WD repeat</keyword>